<accession>Q64TK5</accession>
<evidence type="ECO:0000255" key="1">
    <source>
        <dbReference type="HAMAP-Rule" id="MF_01865"/>
    </source>
</evidence>
<evidence type="ECO:0000255" key="2">
    <source>
        <dbReference type="PROSITE-ProRule" id="PRU01266"/>
    </source>
</evidence>
<name>RIMO_BACFR</name>
<reference key="1">
    <citation type="journal article" date="2004" name="Proc. Natl. Acad. Sci. U.S.A.">
        <title>Genomic analysis of Bacteroides fragilis reveals extensive DNA inversions regulating cell surface adaptation.</title>
        <authorList>
            <person name="Kuwahara T."/>
            <person name="Yamashita A."/>
            <person name="Hirakawa H."/>
            <person name="Nakayama H."/>
            <person name="Toh H."/>
            <person name="Okada N."/>
            <person name="Kuhara S."/>
            <person name="Hattori M."/>
            <person name="Hayashi T."/>
            <person name="Ohnishi Y."/>
        </authorList>
    </citation>
    <scope>NUCLEOTIDE SEQUENCE [LARGE SCALE GENOMIC DNA]</scope>
    <source>
        <strain>YCH46</strain>
    </source>
</reference>
<feature type="chain" id="PRO_0000374705" description="Ribosomal protein uS12 methylthiotransferase RimO">
    <location>
        <begin position="1"/>
        <end position="432"/>
    </location>
</feature>
<feature type="domain" description="MTTase N-terminal" evidence="1">
    <location>
        <begin position="4"/>
        <end position="122"/>
    </location>
</feature>
<feature type="domain" description="Radical SAM core" evidence="2">
    <location>
        <begin position="132"/>
        <end position="363"/>
    </location>
</feature>
<feature type="domain" description="TRAM" evidence="1">
    <location>
        <begin position="366"/>
        <end position="432"/>
    </location>
</feature>
<feature type="binding site" evidence="1">
    <location>
        <position position="13"/>
    </location>
    <ligand>
        <name>[4Fe-4S] cluster</name>
        <dbReference type="ChEBI" id="CHEBI:49883"/>
        <label>1</label>
    </ligand>
</feature>
<feature type="binding site" evidence="1">
    <location>
        <position position="51"/>
    </location>
    <ligand>
        <name>[4Fe-4S] cluster</name>
        <dbReference type="ChEBI" id="CHEBI:49883"/>
        <label>1</label>
    </ligand>
</feature>
<feature type="binding site" evidence="1">
    <location>
        <position position="85"/>
    </location>
    <ligand>
        <name>[4Fe-4S] cluster</name>
        <dbReference type="ChEBI" id="CHEBI:49883"/>
        <label>1</label>
    </ligand>
</feature>
<feature type="binding site" evidence="1">
    <location>
        <position position="146"/>
    </location>
    <ligand>
        <name>[4Fe-4S] cluster</name>
        <dbReference type="ChEBI" id="CHEBI:49883"/>
        <label>2</label>
        <note>4Fe-4S-S-AdoMet</note>
    </ligand>
</feature>
<feature type="binding site" evidence="1">
    <location>
        <position position="150"/>
    </location>
    <ligand>
        <name>[4Fe-4S] cluster</name>
        <dbReference type="ChEBI" id="CHEBI:49883"/>
        <label>2</label>
        <note>4Fe-4S-S-AdoMet</note>
    </ligand>
</feature>
<feature type="binding site" evidence="1">
    <location>
        <position position="153"/>
    </location>
    <ligand>
        <name>[4Fe-4S] cluster</name>
        <dbReference type="ChEBI" id="CHEBI:49883"/>
        <label>2</label>
        <note>4Fe-4S-S-AdoMet</note>
    </ligand>
</feature>
<sequence>MKRKTIDIITLGCSKNLVDSEQLMRQLEEAGYDVTHDSEKPTGEIAVINTCGFIGDAKEESINMILEFAQEKEEGNLEKLFVMGCLSERYLKELAIEIPQVDKFYGKFNWKGLLQDLGKAYHEELHIERTLTTPKHYAYLKISEGCDRKCSYCAIPIITGRHVSRPIEEILDEVRYLVSNGVKEFQVIAQELTYYGVDLYKKQMLPELIERISEIPGVEWIRLHYAYPAHFPEELFRVMRERDNVCKYMDIALQHISDNMLQRMRRHVTKKETYRLIEQFRKEVPGIHLRTTLMVGHPGETEGDFEELKEFVRKVRFDRMGAFTYSEEEGTYAAANYEDSIPQELKQARLDELMAIQQGISTELSASKVGQKMKVIIDRIEGEYYIGRTEFDSPEVDPEVLIRCEGDNLMIGNFYQVQVIDSDEFDLFGEII</sequence>
<organism>
    <name type="scientific">Bacteroides fragilis (strain YCH46)</name>
    <dbReference type="NCBI Taxonomy" id="295405"/>
    <lineage>
        <taxon>Bacteria</taxon>
        <taxon>Pseudomonadati</taxon>
        <taxon>Bacteroidota</taxon>
        <taxon>Bacteroidia</taxon>
        <taxon>Bacteroidales</taxon>
        <taxon>Bacteroidaceae</taxon>
        <taxon>Bacteroides</taxon>
    </lineage>
</organism>
<comment type="function">
    <text evidence="1">Catalyzes the methylthiolation of an aspartic acid residue of ribosomal protein uS12.</text>
</comment>
<comment type="catalytic activity">
    <reaction evidence="1">
        <text>L-aspartate(89)-[ribosomal protein uS12]-hydrogen + (sulfur carrier)-SH + AH2 + 2 S-adenosyl-L-methionine = 3-methylsulfanyl-L-aspartate(89)-[ribosomal protein uS12]-hydrogen + (sulfur carrier)-H + 5'-deoxyadenosine + L-methionine + A + S-adenosyl-L-homocysteine + 2 H(+)</text>
        <dbReference type="Rhea" id="RHEA:37087"/>
        <dbReference type="Rhea" id="RHEA-COMP:10460"/>
        <dbReference type="Rhea" id="RHEA-COMP:10461"/>
        <dbReference type="Rhea" id="RHEA-COMP:14737"/>
        <dbReference type="Rhea" id="RHEA-COMP:14739"/>
        <dbReference type="ChEBI" id="CHEBI:13193"/>
        <dbReference type="ChEBI" id="CHEBI:15378"/>
        <dbReference type="ChEBI" id="CHEBI:17319"/>
        <dbReference type="ChEBI" id="CHEBI:17499"/>
        <dbReference type="ChEBI" id="CHEBI:29917"/>
        <dbReference type="ChEBI" id="CHEBI:29961"/>
        <dbReference type="ChEBI" id="CHEBI:57844"/>
        <dbReference type="ChEBI" id="CHEBI:57856"/>
        <dbReference type="ChEBI" id="CHEBI:59789"/>
        <dbReference type="ChEBI" id="CHEBI:64428"/>
        <dbReference type="ChEBI" id="CHEBI:73599"/>
        <dbReference type="EC" id="2.8.4.4"/>
    </reaction>
</comment>
<comment type="cofactor">
    <cofactor evidence="1">
        <name>[4Fe-4S] cluster</name>
        <dbReference type="ChEBI" id="CHEBI:49883"/>
    </cofactor>
    <text evidence="1">Binds 2 [4Fe-4S] clusters. One cluster is coordinated with 3 cysteines and an exchangeable S-adenosyl-L-methionine.</text>
</comment>
<comment type="subcellular location">
    <subcellularLocation>
        <location evidence="1">Cytoplasm</location>
    </subcellularLocation>
</comment>
<comment type="similarity">
    <text evidence="1">Belongs to the methylthiotransferase family. RimO subfamily.</text>
</comment>
<dbReference type="EC" id="2.8.4.4" evidence="1"/>
<dbReference type="EMBL" id="AP006841">
    <property type="protein sequence ID" value="BAD49174.1"/>
    <property type="molecule type" value="Genomic_DNA"/>
</dbReference>
<dbReference type="RefSeq" id="WP_005787933.1">
    <property type="nucleotide sequence ID" value="NC_006347.1"/>
</dbReference>
<dbReference type="RefSeq" id="YP_099708.1">
    <property type="nucleotide sequence ID" value="NC_006347.1"/>
</dbReference>
<dbReference type="SMR" id="Q64TK5"/>
<dbReference type="STRING" id="295405.BF2425"/>
<dbReference type="GeneID" id="60365869"/>
<dbReference type="KEGG" id="bfr:BF2425"/>
<dbReference type="PATRIC" id="fig|295405.11.peg.2343"/>
<dbReference type="HOGENOM" id="CLU_018697_0_1_10"/>
<dbReference type="OrthoDB" id="9805215at2"/>
<dbReference type="Proteomes" id="UP000002197">
    <property type="component" value="Chromosome"/>
</dbReference>
<dbReference type="GO" id="GO:0005829">
    <property type="term" value="C:cytosol"/>
    <property type="evidence" value="ECO:0007669"/>
    <property type="project" value="TreeGrafter"/>
</dbReference>
<dbReference type="GO" id="GO:0051539">
    <property type="term" value="F:4 iron, 4 sulfur cluster binding"/>
    <property type="evidence" value="ECO:0007669"/>
    <property type="project" value="UniProtKB-UniRule"/>
</dbReference>
<dbReference type="GO" id="GO:0035599">
    <property type="term" value="F:aspartic acid methylthiotransferase activity"/>
    <property type="evidence" value="ECO:0007669"/>
    <property type="project" value="TreeGrafter"/>
</dbReference>
<dbReference type="GO" id="GO:0046872">
    <property type="term" value="F:metal ion binding"/>
    <property type="evidence" value="ECO:0007669"/>
    <property type="project" value="UniProtKB-KW"/>
</dbReference>
<dbReference type="GO" id="GO:0103039">
    <property type="term" value="F:protein methylthiotransferase activity"/>
    <property type="evidence" value="ECO:0007669"/>
    <property type="project" value="UniProtKB-EC"/>
</dbReference>
<dbReference type="GO" id="GO:0006400">
    <property type="term" value="P:tRNA modification"/>
    <property type="evidence" value="ECO:0007669"/>
    <property type="project" value="InterPro"/>
</dbReference>
<dbReference type="CDD" id="cd01335">
    <property type="entry name" value="Radical_SAM"/>
    <property type="match status" value="1"/>
</dbReference>
<dbReference type="FunFam" id="2.40.50.140:FF:000210">
    <property type="entry name" value="Ribosomal protein S12 methylthiotransferase RimO"/>
    <property type="match status" value="1"/>
</dbReference>
<dbReference type="FunFam" id="3.80.30.20:FF:000001">
    <property type="entry name" value="tRNA-2-methylthio-N(6)-dimethylallyladenosine synthase 2"/>
    <property type="match status" value="1"/>
</dbReference>
<dbReference type="Gene3D" id="3.40.50.12160">
    <property type="entry name" value="Methylthiotransferase, N-terminal domain"/>
    <property type="match status" value="1"/>
</dbReference>
<dbReference type="Gene3D" id="2.40.50.140">
    <property type="entry name" value="Nucleic acid-binding proteins"/>
    <property type="match status" value="1"/>
</dbReference>
<dbReference type="Gene3D" id="3.80.30.20">
    <property type="entry name" value="tm_1862 like domain"/>
    <property type="match status" value="1"/>
</dbReference>
<dbReference type="HAMAP" id="MF_01865">
    <property type="entry name" value="MTTase_RimO"/>
    <property type="match status" value="1"/>
</dbReference>
<dbReference type="InterPro" id="IPR006638">
    <property type="entry name" value="Elp3/MiaA/NifB-like_rSAM"/>
</dbReference>
<dbReference type="InterPro" id="IPR005839">
    <property type="entry name" value="Methylthiotransferase"/>
</dbReference>
<dbReference type="InterPro" id="IPR020612">
    <property type="entry name" value="Methylthiotransferase_CS"/>
</dbReference>
<dbReference type="InterPro" id="IPR013848">
    <property type="entry name" value="Methylthiotransferase_N"/>
</dbReference>
<dbReference type="InterPro" id="IPR038135">
    <property type="entry name" value="Methylthiotransferase_N_sf"/>
</dbReference>
<dbReference type="InterPro" id="IPR012340">
    <property type="entry name" value="NA-bd_OB-fold"/>
</dbReference>
<dbReference type="InterPro" id="IPR005840">
    <property type="entry name" value="Ribosomal_uS12_MeSTrfase_RimO"/>
</dbReference>
<dbReference type="InterPro" id="IPR007197">
    <property type="entry name" value="rSAM"/>
</dbReference>
<dbReference type="InterPro" id="IPR023404">
    <property type="entry name" value="rSAM_horseshoe"/>
</dbReference>
<dbReference type="InterPro" id="IPR002792">
    <property type="entry name" value="TRAM_dom"/>
</dbReference>
<dbReference type="NCBIfam" id="TIGR01125">
    <property type="entry name" value="30S ribosomal protein S12 methylthiotransferase RimO"/>
    <property type="match status" value="1"/>
</dbReference>
<dbReference type="NCBIfam" id="TIGR00089">
    <property type="entry name" value="MiaB/RimO family radical SAM methylthiotransferase"/>
    <property type="match status" value="1"/>
</dbReference>
<dbReference type="PANTHER" id="PTHR43837">
    <property type="entry name" value="RIBOSOMAL PROTEIN S12 METHYLTHIOTRANSFERASE RIMO"/>
    <property type="match status" value="1"/>
</dbReference>
<dbReference type="PANTHER" id="PTHR43837:SF1">
    <property type="entry name" value="RIBOSOMAL PROTEIN US12 METHYLTHIOTRANSFERASE RIMO"/>
    <property type="match status" value="1"/>
</dbReference>
<dbReference type="Pfam" id="PF04055">
    <property type="entry name" value="Radical_SAM"/>
    <property type="match status" value="1"/>
</dbReference>
<dbReference type="Pfam" id="PF18693">
    <property type="entry name" value="TRAM_2"/>
    <property type="match status" value="1"/>
</dbReference>
<dbReference type="Pfam" id="PF00919">
    <property type="entry name" value="UPF0004"/>
    <property type="match status" value="1"/>
</dbReference>
<dbReference type="SFLD" id="SFLDG01082">
    <property type="entry name" value="B12-binding_domain_containing"/>
    <property type="match status" value="1"/>
</dbReference>
<dbReference type="SFLD" id="SFLDS00029">
    <property type="entry name" value="Radical_SAM"/>
    <property type="match status" value="1"/>
</dbReference>
<dbReference type="SFLD" id="SFLDF00274">
    <property type="entry name" value="ribosomal_protein_S12_methylth"/>
    <property type="match status" value="1"/>
</dbReference>
<dbReference type="SMART" id="SM00729">
    <property type="entry name" value="Elp3"/>
    <property type="match status" value="1"/>
</dbReference>
<dbReference type="SUPFAM" id="SSF102114">
    <property type="entry name" value="Radical SAM enzymes"/>
    <property type="match status" value="1"/>
</dbReference>
<dbReference type="PROSITE" id="PS51449">
    <property type="entry name" value="MTTASE_N"/>
    <property type="match status" value="1"/>
</dbReference>
<dbReference type="PROSITE" id="PS01278">
    <property type="entry name" value="MTTASE_RADICAL"/>
    <property type="match status" value="1"/>
</dbReference>
<dbReference type="PROSITE" id="PS51918">
    <property type="entry name" value="RADICAL_SAM"/>
    <property type="match status" value="1"/>
</dbReference>
<dbReference type="PROSITE" id="PS50926">
    <property type="entry name" value="TRAM"/>
    <property type="match status" value="1"/>
</dbReference>
<protein>
    <recommendedName>
        <fullName evidence="1">Ribosomal protein uS12 methylthiotransferase RimO</fullName>
        <shortName evidence="1">uS12 MTTase</shortName>
        <shortName evidence="1">uS12 methylthiotransferase</shortName>
        <ecNumber evidence="1">2.8.4.4</ecNumber>
    </recommendedName>
    <alternativeName>
        <fullName evidence="1">Ribosomal protein uS12 (aspartate-C(3))-methylthiotransferase</fullName>
    </alternativeName>
    <alternativeName>
        <fullName evidence="1">Ribosome maturation factor RimO</fullName>
    </alternativeName>
</protein>
<gene>
    <name evidence="1" type="primary">rimO</name>
    <name type="ordered locus">BF2425</name>
</gene>
<keyword id="KW-0004">4Fe-4S</keyword>
<keyword id="KW-0963">Cytoplasm</keyword>
<keyword id="KW-0408">Iron</keyword>
<keyword id="KW-0411">Iron-sulfur</keyword>
<keyword id="KW-0479">Metal-binding</keyword>
<keyword id="KW-0949">S-adenosyl-L-methionine</keyword>
<keyword id="KW-0808">Transferase</keyword>
<proteinExistence type="inferred from homology"/>